<organism>
    <name type="scientific">Mus musculus</name>
    <name type="common">Mouse</name>
    <dbReference type="NCBI Taxonomy" id="10090"/>
    <lineage>
        <taxon>Eukaryota</taxon>
        <taxon>Metazoa</taxon>
        <taxon>Chordata</taxon>
        <taxon>Craniata</taxon>
        <taxon>Vertebrata</taxon>
        <taxon>Euteleostomi</taxon>
        <taxon>Mammalia</taxon>
        <taxon>Eutheria</taxon>
        <taxon>Euarchontoglires</taxon>
        <taxon>Glires</taxon>
        <taxon>Rodentia</taxon>
        <taxon>Myomorpha</taxon>
        <taxon>Muroidea</taxon>
        <taxon>Muridae</taxon>
        <taxon>Murinae</taxon>
        <taxon>Mus</taxon>
        <taxon>Mus</taxon>
    </lineage>
</organism>
<reference key="1">
    <citation type="journal article" date="2000" name="J. Biol. Chem.">
        <title>Aquaporin adipose, a putative glycerol channel in adipocytes.</title>
        <authorList>
            <person name="Kishida K."/>
            <person name="Kuriyama H."/>
            <person name="Funahashi T."/>
            <person name="Shimomura I."/>
            <person name="Kihara S."/>
            <person name="Ouchi N."/>
            <person name="Nishida M."/>
            <person name="Nishizawa H."/>
            <person name="Masuda M."/>
            <person name="Takahashi M."/>
            <person name="Hotta K."/>
            <person name="Nakamura T."/>
            <person name="Yamashita S."/>
            <person name="Tochino Y."/>
            <person name="Matsuzawa Y."/>
        </authorList>
    </citation>
    <scope>NUCLEOTIDE SEQUENCE [MRNA]</scope>
    <source>
        <tissue>Liver</tissue>
    </source>
</reference>
<reference key="2">
    <citation type="journal article" date="2005" name="Science">
        <title>The transcriptional landscape of the mammalian genome.</title>
        <authorList>
            <person name="Carninci P."/>
            <person name="Kasukawa T."/>
            <person name="Katayama S."/>
            <person name="Gough J."/>
            <person name="Frith M.C."/>
            <person name="Maeda N."/>
            <person name="Oyama R."/>
            <person name="Ravasi T."/>
            <person name="Lenhard B."/>
            <person name="Wells C."/>
            <person name="Kodzius R."/>
            <person name="Shimokawa K."/>
            <person name="Bajic V.B."/>
            <person name="Brenner S.E."/>
            <person name="Batalov S."/>
            <person name="Forrest A.R."/>
            <person name="Zavolan M."/>
            <person name="Davis M.J."/>
            <person name="Wilming L.G."/>
            <person name="Aidinis V."/>
            <person name="Allen J.E."/>
            <person name="Ambesi-Impiombato A."/>
            <person name="Apweiler R."/>
            <person name="Aturaliya R.N."/>
            <person name="Bailey T.L."/>
            <person name="Bansal M."/>
            <person name="Baxter L."/>
            <person name="Beisel K.W."/>
            <person name="Bersano T."/>
            <person name="Bono H."/>
            <person name="Chalk A.M."/>
            <person name="Chiu K.P."/>
            <person name="Choudhary V."/>
            <person name="Christoffels A."/>
            <person name="Clutterbuck D.R."/>
            <person name="Crowe M.L."/>
            <person name="Dalla E."/>
            <person name="Dalrymple B.P."/>
            <person name="de Bono B."/>
            <person name="Della Gatta G."/>
            <person name="di Bernardo D."/>
            <person name="Down T."/>
            <person name="Engstrom P."/>
            <person name="Fagiolini M."/>
            <person name="Faulkner G."/>
            <person name="Fletcher C.F."/>
            <person name="Fukushima T."/>
            <person name="Furuno M."/>
            <person name="Futaki S."/>
            <person name="Gariboldi M."/>
            <person name="Georgii-Hemming P."/>
            <person name="Gingeras T.R."/>
            <person name="Gojobori T."/>
            <person name="Green R.E."/>
            <person name="Gustincich S."/>
            <person name="Harbers M."/>
            <person name="Hayashi Y."/>
            <person name="Hensch T.K."/>
            <person name="Hirokawa N."/>
            <person name="Hill D."/>
            <person name="Huminiecki L."/>
            <person name="Iacono M."/>
            <person name="Ikeo K."/>
            <person name="Iwama A."/>
            <person name="Ishikawa T."/>
            <person name="Jakt M."/>
            <person name="Kanapin A."/>
            <person name="Katoh M."/>
            <person name="Kawasawa Y."/>
            <person name="Kelso J."/>
            <person name="Kitamura H."/>
            <person name="Kitano H."/>
            <person name="Kollias G."/>
            <person name="Krishnan S.P."/>
            <person name="Kruger A."/>
            <person name="Kummerfeld S.K."/>
            <person name="Kurochkin I.V."/>
            <person name="Lareau L.F."/>
            <person name="Lazarevic D."/>
            <person name="Lipovich L."/>
            <person name="Liu J."/>
            <person name="Liuni S."/>
            <person name="McWilliam S."/>
            <person name="Madan Babu M."/>
            <person name="Madera M."/>
            <person name="Marchionni L."/>
            <person name="Matsuda H."/>
            <person name="Matsuzawa S."/>
            <person name="Miki H."/>
            <person name="Mignone F."/>
            <person name="Miyake S."/>
            <person name="Morris K."/>
            <person name="Mottagui-Tabar S."/>
            <person name="Mulder N."/>
            <person name="Nakano N."/>
            <person name="Nakauchi H."/>
            <person name="Ng P."/>
            <person name="Nilsson R."/>
            <person name="Nishiguchi S."/>
            <person name="Nishikawa S."/>
            <person name="Nori F."/>
            <person name="Ohara O."/>
            <person name="Okazaki Y."/>
            <person name="Orlando V."/>
            <person name="Pang K.C."/>
            <person name="Pavan W.J."/>
            <person name="Pavesi G."/>
            <person name="Pesole G."/>
            <person name="Petrovsky N."/>
            <person name="Piazza S."/>
            <person name="Reed J."/>
            <person name="Reid J.F."/>
            <person name="Ring B.Z."/>
            <person name="Ringwald M."/>
            <person name="Rost B."/>
            <person name="Ruan Y."/>
            <person name="Salzberg S.L."/>
            <person name="Sandelin A."/>
            <person name="Schneider C."/>
            <person name="Schoenbach C."/>
            <person name="Sekiguchi K."/>
            <person name="Semple C.A."/>
            <person name="Seno S."/>
            <person name="Sessa L."/>
            <person name="Sheng Y."/>
            <person name="Shibata Y."/>
            <person name="Shimada H."/>
            <person name="Shimada K."/>
            <person name="Silva D."/>
            <person name="Sinclair B."/>
            <person name="Sperling S."/>
            <person name="Stupka E."/>
            <person name="Sugiura K."/>
            <person name="Sultana R."/>
            <person name="Takenaka Y."/>
            <person name="Taki K."/>
            <person name="Tammoja K."/>
            <person name="Tan S.L."/>
            <person name="Tang S."/>
            <person name="Taylor M.S."/>
            <person name="Tegner J."/>
            <person name="Teichmann S.A."/>
            <person name="Ueda H.R."/>
            <person name="van Nimwegen E."/>
            <person name="Verardo R."/>
            <person name="Wei C.L."/>
            <person name="Yagi K."/>
            <person name="Yamanishi H."/>
            <person name="Zabarovsky E."/>
            <person name="Zhu S."/>
            <person name="Zimmer A."/>
            <person name="Hide W."/>
            <person name="Bult C."/>
            <person name="Grimmond S.M."/>
            <person name="Teasdale R.D."/>
            <person name="Liu E.T."/>
            <person name="Brusic V."/>
            <person name="Quackenbush J."/>
            <person name="Wahlestedt C."/>
            <person name="Mattick J.S."/>
            <person name="Hume D.A."/>
            <person name="Kai C."/>
            <person name="Sasaki D."/>
            <person name="Tomaru Y."/>
            <person name="Fukuda S."/>
            <person name="Kanamori-Katayama M."/>
            <person name="Suzuki M."/>
            <person name="Aoki J."/>
            <person name="Arakawa T."/>
            <person name="Iida J."/>
            <person name="Imamura K."/>
            <person name="Itoh M."/>
            <person name="Kato T."/>
            <person name="Kawaji H."/>
            <person name="Kawagashira N."/>
            <person name="Kawashima T."/>
            <person name="Kojima M."/>
            <person name="Kondo S."/>
            <person name="Konno H."/>
            <person name="Nakano K."/>
            <person name="Ninomiya N."/>
            <person name="Nishio T."/>
            <person name="Okada M."/>
            <person name="Plessy C."/>
            <person name="Shibata K."/>
            <person name="Shiraki T."/>
            <person name="Suzuki S."/>
            <person name="Tagami M."/>
            <person name="Waki K."/>
            <person name="Watahiki A."/>
            <person name="Okamura-Oho Y."/>
            <person name="Suzuki H."/>
            <person name="Kawai J."/>
            <person name="Hayashizaki Y."/>
        </authorList>
    </citation>
    <scope>NUCLEOTIDE SEQUENCE [LARGE SCALE MRNA]</scope>
    <source>
        <strain>C57BL/6J</strain>
        <tissue>Liver</tissue>
    </source>
</reference>
<reference key="3">
    <citation type="journal article" date="2002" name="Proc. Natl. Acad. Sci. U.S.A.">
        <title>Arsenite transport by mammalian aquaglyceroporins AQP7 and AQP9.</title>
        <authorList>
            <person name="Liu Z."/>
            <person name="Shen J."/>
            <person name="Carbrey J.M."/>
            <person name="Mukhopadhyay R."/>
            <person name="Agre P."/>
            <person name="Rosen B.P."/>
        </authorList>
    </citation>
    <scope>FUNCTION</scope>
    <scope>TRANSPORTER ACTIVITY</scope>
</reference>
<reference key="4">
    <citation type="journal article" date="2007" name="Proc. Natl. Acad. Sci. U.S.A.">
        <title>Defective glycerol metabolism in aquaporin 9 (AQP9) knockout mice.</title>
        <authorList>
            <person name="Rojek A.M."/>
            <person name="Skowronski M.T."/>
            <person name="Fuechtbauer E.M."/>
            <person name="Fuechtbauer A.C."/>
            <person name="Fenton R.A."/>
            <person name="Agre P."/>
            <person name="Froekiaer J."/>
            <person name="Nielsen S."/>
        </authorList>
    </citation>
    <scope>FUNCTION</scope>
    <scope>DISRUPTION PHENOTYPE</scope>
</reference>
<reference key="5">
    <citation type="journal article" date="2009" name="Proc. Natl. Acad. Sci. U.S.A.">
        <title>Reduced arsenic clearance and increased toxicity in aquaglyceroporin-9-null mice.</title>
        <authorList>
            <person name="Carbrey J.M."/>
            <person name="Song L."/>
            <person name="Zhou Y."/>
            <person name="Yoshinaga M."/>
            <person name="Rojek A."/>
            <person name="Wang Y."/>
            <person name="Liu Y."/>
            <person name="Lujan H.L."/>
            <person name="DiCarlo S.E."/>
            <person name="Nielsen S."/>
            <person name="Rosen B.P."/>
            <person name="Agre P."/>
            <person name="Mukhopadhyay R."/>
        </authorList>
    </citation>
    <scope>FUNCTION</scope>
    <scope>TRANSPORTER ACTIVITY</scope>
</reference>
<reference key="6">
    <citation type="journal article" date="2011" name="J. Biol. Chem.">
        <title>Aquaporin-9 protein is the primary route of hepatocyte glycerol uptake for glycerol gluconeogenesis in mice.</title>
        <authorList>
            <person name="Jelen S."/>
            <person name="Wacker S."/>
            <person name="Aponte-Santamaria C."/>
            <person name="Skott M."/>
            <person name="Rojek A."/>
            <person name="Johanson U."/>
            <person name="Kjellbom P."/>
            <person name="Nielsen S."/>
            <person name="de Groot B.L."/>
            <person name="Ruetzler M."/>
        </authorList>
    </citation>
    <scope>FUNCTION</scope>
    <scope>TRANSPORTER ACTIVITY</scope>
</reference>
<reference key="7">
    <citation type="journal article" date="2012" name="Am. J. Physiol.">
        <title>Aquaporin-9 and urea transporter-A gene deletions affect urea transmembrane passage in murine hepatocytes.</title>
        <authorList>
            <person name="Jelen S."/>
            <person name="Gena P."/>
            <person name="Lebeck J."/>
            <person name="Rojek A."/>
            <person name="Praetorius J."/>
            <person name="Froekiaer J."/>
            <person name="Fenton R.A."/>
            <person name="Nielsen S."/>
            <person name="Calamita G."/>
            <person name="Ruetzler M."/>
        </authorList>
    </citation>
    <scope>FUNCTION</scope>
    <scope>SUBCELLULAR LOCATION</scope>
</reference>
<reference key="8">
    <citation type="journal article" date="2016" name="Biochem. Biophys. Res. Commun.">
        <title>Aquaporin-9 facilitates membrane transport of hydrogen peroxide in mammalian cells.</title>
        <authorList>
            <person name="Watanabe S."/>
            <person name="Moniaga C.S."/>
            <person name="Nielsen S."/>
            <person name="Hara-Chikuma M."/>
        </authorList>
    </citation>
    <scope>FUNCTION</scope>
    <scope>TRANSPORTER ACTIVITY</scope>
</reference>
<reference key="9">
    <citation type="journal article" date="2020" name="Mol. Neurobiol.">
        <title>Aqp9 Gene Deletion Enhances Retinal Ganglion Cell (RGC) Death and Dysfunction Induced by Optic Nerve Crush: Evidence that Aquaporin 9 Acts as an Astrocyte-to-Neuron Lactate Shuttle in Concert with Monocarboxylate Transporters To Support RGC Function and Survival.</title>
        <authorList>
            <person name="Mori S."/>
            <person name="Kurimoto T."/>
            <person name="Miki A."/>
            <person name="Maeda H."/>
            <person name="Kusuhara S."/>
            <person name="Nakamura M."/>
        </authorList>
    </citation>
    <scope>FUNCTION</scope>
    <scope>TRANSPORTER ACTIVITY</scope>
</reference>
<feature type="chain" id="PRO_0000063965" description="Aquaporin-9">
    <location>
        <begin position="1"/>
        <end position="295"/>
    </location>
</feature>
<feature type="topological domain" description="Cytoplasmic" evidence="3">
    <location>
        <begin position="1"/>
        <end position="24"/>
    </location>
</feature>
<feature type="transmembrane region" description="Helical; Name=1" evidence="3">
    <location>
        <begin position="25"/>
        <end position="43"/>
    </location>
</feature>
<feature type="topological domain" description="Extracellular" evidence="3">
    <location>
        <begin position="44"/>
        <end position="57"/>
    </location>
</feature>
<feature type="transmembrane region" description="Helical; Name=2" evidence="3">
    <location>
        <begin position="58"/>
        <end position="77"/>
    </location>
</feature>
<feature type="topological domain" description="Cytoplasmic" evidence="3">
    <location>
        <begin position="78"/>
        <end position="79"/>
    </location>
</feature>
<feature type="intramembrane region" description="Discontinuously helical" evidence="3">
    <location>
        <begin position="80"/>
        <end position="92"/>
    </location>
</feature>
<feature type="topological domain" description="Cytoplasmic" evidence="3">
    <location>
        <begin position="93"/>
        <end position="98"/>
    </location>
</feature>
<feature type="transmembrane region" description="Helical; Name=3" evidence="3">
    <location>
        <begin position="99"/>
        <end position="123"/>
    </location>
</feature>
<feature type="topological domain" description="Extracellular" evidence="3">
    <location>
        <begin position="124"/>
        <end position="160"/>
    </location>
</feature>
<feature type="transmembrane region" description="Helical; Name=4" evidence="3">
    <location>
        <begin position="161"/>
        <end position="178"/>
    </location>
</feature>
<feature type="topological domain" description="Cytoplasmic" evidence="3">
    <location>
        <begin position="179"/>
        <end position="190"/>
    </location>
</feature>
<feature type="transmembrane region" description="Helical; Name=5" evidence="3">
    <location>
        <begin position="191"/>
        <end position="207"/>
    </location>
</feature>
<feature type="topological domain" description="Extracellular" evidence="3">
    <location>
        <begin position="208"/>
        <end position="210"/>
    </location>
</feature>
<feature type="intramembrane region" description="Discontinuously helical" evidence="3">
    <location>
        <begin position="211"/>
        <end position="225"/>
    </location>
</feature>
<feature type="topological domain" description="Extracellular" evidence="3">
    <location>
        <begin position="226"/>
        <end position="243"/>
    </location>
</feature>
<feature type="transmembrane region" description="Helical; Name=6" evidence="3">
    <location>
        <begin position="244"/>
        <end position="264"/>
    </location>
</feature>
<feature type="topological domain" description="Cytoplasmic" evidence="3">
    <location>
        <begin position="265"/>
        <end position="295"/>
    </location>
</feature>
<feature type="short sequence motif" description="NPA 1" evidence="3">
    <location>
        <begin position="84"/>
        <end position="86"/>
    </location>
</feature>
<feature type="short sequence motif" description="NPA 2" evidence="3">
    <location>
        <begin position="216"/>
        <end position="218"/>
    </location>
</feature>
<name>AQP9_MOUSE</name>
<keyword id="KW-1003">Cell membrane</keyword>
<keyword id="KW-0472">Membrane</keyword>
<keyword id="KW-1185">Reference proteome</keyword>
<keyword id="KW-0677">Repeat</keyword>
<keyword id="KW-0812">Transmembrane</keyword>
<keyword id="KW-1133">Transmembrane helix</keyword>
<keyword id="KW-0813">Transport</keyword>
<accession>Q9JJJ3</accession>
<sequence>MPSEKDRAKKNLVQRLALKSCLAKETLSEFLGTFIMIVLGCGSIAQAVLSREKAGGIITINIGFATAVVMALYATFGVSGGHINPAVSFAMCTFGRMEWFKFPFYVGAQLLGAFVGAATVFGIYYDGLMAFADGKLLITGENGTAFIFATYPKPFVSVPGAFVDQVVSTMFLLLIVFAIFDSRNLGVPRGLEPIVIGLLIIVISCSLGLNSGCAMNPARDLSPRLFTALAGWGFEVFTFGNNFWWIPVVGPMIGAVLGGLIYVLFIQMHHSNPDPEVKAEPAENNLEKHELSVIM</sequence>
<comment type="function">
    <text evidence="2 4 5 6 7 8 9 10">Aquaglyceroporins form homotetrameric transmembrane channels, with each monomer independently mediating glycerol and water transport across the plasma membrane along their osmotic gradient (PubMed:22081610). AQP9 is the primary route for glycerol uptake in hepatocytes, supporting hepatic gluconeogenesis (PubMed:17360690, PubMed:22081610). It exhibits broad specificity and may transport various small, non-charged solutes, including carbamides, polyols, purines, and pyrimidines (By similarity). AQP9 may also facilitate hepatic urea extrusion (PubMed:22081610, PubMed:23042941). Due to its permeability to lactate, AQP9 might participate in the astrocyte-to-neuron lactate shuttle, supplying neurons with energy (PubMed:32748371). Additionally, AQP9 is permeable to arsenite, contributing to arsenic excretion by the liver and providing partial protection against arsenic toxicity (PubMed:11972053, PubMed:19805235). It is also permeable to H2O2 in vivo (PubMed:26837049). Could also be permeable to ammonium (By similarity).</text>
</comment>
<comment type="catalytic activity">
    <reaction evidence="7">
        <text>glycerol(in) = glycerol(out)</text>
        <dbReference type="Rhea" id="RHEA:29675"/>
        <dbReference type="ChEBI" id="CHEBI:17754"/>
    </reaction>
</comment>
<comment type="catalytic activity">
    <reaction evidence="13">
        <text>H2O(in) = H2O(out)</text>
        <dbReference type="Rhea" id="RHEA:29667"/>
        <dbReference type="ChEBI" id="CHEBI:15377"/>
    </reaction>
</comment>
<comment type="catalytic activity">
    <reaction evidence="13">
        <text>urea(in) = urea(out)</text>
        <dbReference type="Rhea" id="RHEA:32799"/>
        <dbReference type="ChEBI" id="CHEBI:16199"/>
    </reaction>
</comment>
<comment type="catalytic activity">
    <reaction evidence="16">
        <text>(S)-lactate(in) = (S)-lactate(out)</text>
        <dbReference type="Rhea" id="RHEA:34987"/>
        <dbReference type="ChEBI" id="CHEBI:16651"/>
    </reaction>
</comment>
<comment type="catalytic activity">
    <reaction evidence="2">
        <text>NH4(+)(in) = NH4(+)(out)</text>
        <dbReference type="Rhea" id="RHEA:28747"/>
        <dbReference type="ChEBI" id="CHEBI:28938"/>
    </reaction>
</comment>
<comment type="catalytic activity">
    <reaction evidence="1">
        <text>uracil(in) = uracil(out)</text>
        <dbReference type="Rhea" id="RHEA:69404"/>
        <dbReference type="ChEBI" id="CHEBI:17568"/>
    </reaction>
</comment>
<comment type="catalytic activity">
    <reaction evidence="1">
        <text>adenine(out) = adenine(in)</text>
        <dbReference type="Rhea" id="RHEA:71523"/>
        <dbReference type="ChEBI" id="CHEBI:16708"/>
    </reaction>
</comment>
<comment type="catalytic activity">
    <reaction evidence="1">
        <text>3-hydroxybutanoate(in) = 3-hydroxybutanoate(out)</text>
        <dbReference type="Rhea" id="RHEA:81351"/>
        <dbReference type="ChEBI" id="CHEBI:37054"/>
    </reaction>
</comment>
<comment type="catalytic activity">
    <reaction evidence="1">
        <text>D-sorbitol(in) = D-sorbitol(out)</text>
        <dbReference type="Rhea" id="RHEA:81359"/>
        <dbReference type="ChEBI" id="CHEBI:17924"/>
    </reaction>
</comment>
<comment type="catalytic activity">
    <reaction evidence="1">
        <text>D-mannitol(in) = D-mannitol(out)</text>
        <dbReference type="Rhea" id="RHEA:81355"/>
        <dbReference type="ChEBI" id="CHEBI:16899"/>
    </reaction>
</comment>
<comment type="catalytic activity">
    <reaction evidence="15">
        <text>H2O2(out) = H2O2(in)</text>
        <dbReference type="Rhea" id="RHEA:74375"/>
        <dbReference type="ChEBI" id="CHEBI:16240"/>
    </reaction>
</comment>
<comment type="catalytic activity">
    <reaction evidence="4 6">
        <text>arsenite(in) = arsenite(out)</text>
        <dbReference type="Rhea" id="RHEA:81347"/>
        <dbReference type="ChEBI" id="CHEBI:29242"/>
    </reaction>
</comment>
<comment type="catalytic activity">
    <reaction evidence="1">
        <text>selenite(in) = selenite(out)</text>
        <dbReference type="Rhea" id="RHEA:34891"/>
        <dbReference type="ChEBI" id="CHEBI:18212"/>
    </reaction>
</comment>
<comment type="subunit">
    <text evidence="3">Homotetramer; each monomer provides an independent glycerol/water pore.</text>
</comment>
<comment type="subcellular location">
    <subcellularLocation>
        <location evidence="14">Cell membrane</location>
        <topology evidence="3">Multi-pass membrane protein</topology>
    </subcellularLocation>
    <subcellularLocation>
        <location evidence="14">Basolateral cell membrane</location>
        <topology evidence="3">Multi-pass membrane protein</topology>
    </subcellularLocation>
    <text evidence="8">Functions at the hepatocyte basolateral membrane.</text>
</comment>
<comment type="domain">
    <text evidence="3">Aquaporins contain two tandem repeats each containing three membrane-spanning domains and a pore-forming loop with the signature motif Asn-Pro-Ala (NPA).</text>
</comment>
<comment type="disruption phenotype">
    <text evidence="5">Knockout mice lacking Aqp9 are viable, fertile and have no detectable differences in physical appearance, body weight, or behavior (PubMed:17360690). They exhibit a marked increase in levels of plasma glycerol and triglyceride (PubMed:17360690).</text>
</comment>
<comment type="similarity">
    <text evidence="11">Belongs to the MIP/aquaporin (TC 1.A.8) family.</text>
</comment>
<dbReference type="EMBL" id="AB037180">
    <property type="protein sequence ID" value="BAB03271.1"/>
    <property type="molecule type" value="mRNA"/>
</dbReference>
<dbReference type="EMBL" id="AK050042">
    <property type="protein sequence ID" value="BAC34044.1"/>
    <property type="molecule type" value="mRNA"/>
</dbReference>
<dbReference type="EMBL" id="AK050325">
    <property type="protein sequence ID" value="BAC34190.1"/>
    <property type="molecule type" value="mRNA"/>
</dbReference>
<dbReference type="CCDS" id="CCDS23325.1"/>
<dbReference type="RefSeq" id="NP_071309.1">
    <property type="nucleotide sequence ID" value="NM_022026.3"/>
</dbReference>
<dbReference type="RefSeq" id="XP_006511394.1">
    <property type="nucleotide sequence ID" value="XM_006511331.3"/>
</dbReference>
<dbReference type="RefSeq" id="XP_006511395.1">
    <property type="nucleotide sequence ID" value="XM_006511332.5"/>
</dbReference>
<dbReference type="RefSeq" id="XP_011241084.1">
    <property type="nucleotide sequence ID" value="XM_011242782.4"/>
</dbReference>
<dbReference type="RefSeq" id="XP_011241085.1">
    <property type="nucleotide sequence ID" value="XM_011242783.3"/>
</dbReference>
<dbReference type="RefSeq" id="XP_036011062.1">
    <property type="nucleotide sequence ID" value="XM_036155169.1"/>
</dbReference>
<dbReference type="SMR" id="Q9JJJ3"/>
<dbReference type="FunCoup" id="Q9JJJ3">
    <property type="interactions" value="107"/>
</dbReference>
<dbReference type="STRING" id="10090.ENSMUSP00000050127"/>
<dbReference type="iPTMnet" id="Q9JJJ3"/>
<dbReference type="PhosphoSitePlus" id="Q9JJJ3"/>
<dbReference type="jPOST" id="Q9JJJ3"/>
<dbReference type="PaxDb" id="10090-ENSMUSP00000074063"/>
<dbReference type="ProteomicsDB" id="273915"/>
<dbReference type="Antibodypedia" id="53183">
    <property type="antibodies" value="143 antibodies from 26 providers"/>
</dbReference>
<dbReference type="DNASU" id="64008"/>
<dbReference type="Ensembl" id="ENSMUST00000074465.9">
    <property type="protein sequence ID" value="ENSMUSP00000074063.3"/>
    <property type="gene ID" value="ENSMUSG00000032204.14"/>
</dbReference>
<dbReference type="Ensembl" id="ENSMUST00000113570.8">
    <property type="protein sequence ID" value="ENSMUSP00000109200.2"/>
    <property type="gene ID" value="ENSMUSG00000032204.14"/>
</dbReference>
<dbReference type="GeneID" id="64008"/>
<dbReference type="KEGG" id="mmu:64008"/>
<dbReference type="UCSC" id="uc009qov.2">
    <property type="organism name" value="mouse"/>
</dbReference>
<dbReference type="AGR" id="MGI:1891066"/>
<dbReference type="CTD" id="366"/>
<dbReference type="MGI" id="MGI:1891066">
    <property type="gene designation" value="Aqp9"/>
</dbReference>
<dbReference type="VEuPathDB" id="HostDB:ENSMUSG00000032204"/>
<dbReference type="eggNOG" id="KOG0224">
    <property type="taxonomic scope" value="Eukaryota"/>
</dbReference>
<dbReference type="GeneTree" id="ENSGT00940000160582"/>
<dbReference type="HOGENOM" id="CLU_020019_9_1_1"/>
<dbReference type="InParanoid" id="Q9JJJ3"/>
<dbReference type="OMA" id="WGFAVLT"/>
<dbReference type="OrthoDB" id="3222at2759"/>
<dbReference type="PhylomeDB" id="Q9JJJ3"/>
<dbReference type="TreeFam" id="TF313173"/>
<dbReference type="Reactome" id="R-MMU-432030">
    <property type="pathway name" value="Transport of glycerol from adipocytes to the liver by Aquaporins"/>
</dbReference>
<dbReference type="Reactome" id="R-MMU-432047">
    <property type="pathway name" value="Passive transport by Aquaporins"/>
</dbReference>
<dbReference type="BioGRID-ORCS" id="64008">
    <property type="hits" value="1 hit in 78 CRISPR screens"/>
</dbReference>
<dbReference type="ChiTaRS" id="Aqp9">
    <property type="organism name" value="mouse"/>
</dbReference>
<dbReference type="PRO" id="PR:Q9JJJ3"/>
<dbReference type="Proteomes" id="UP000000589">
    <property type="component" value="Chromosome 9"/>
</dbReference>
<dbReference type="RNAct" id="Q9JJJ3">
    <property type="molecule type" value="protein"/>
</dbReference>
<dbReference type="Bgee" id="ENSMUSG00000032204">
    <property type="expression patterns" value="Expressed in left lobe of liver and 76 other cell types or tissues"/>
</dbReference>
<dbReference type="ExpressionAtlas" id="Q9JJJ3">
    <property type="expression patterns" value="baseline and differential"/>
</dbReference>
<dbReference type="GO" id="GO:0016323">
    <property type="term" value="C:basolateral plasma membrane"/>
    <property type="evidence" value="ECO:0000315"/>
    <property type="project" value="UniProtKB"/>
</dbReference>
<dbReference type="GO" id="GO:0043231">
    <property type="term" value="C:intracellular membrane-bounded organelle"/>
    <property type="evidence" value="ECO:0007669"/>
    <property type="project" value="Ensembl"/>
</dbReference>
<dbReference type="GO" id="GO:0005886">
    <property type="term" value="C:plasma membrane"/>
    <property type="evidence" value="ECO:0000250"/>
    <property type="project" value="UniProtKB"/>
</dbReference>
<dbReference type="GO" id="GO:0015267">
    <property type="term" value="F:channel activity"/>
    <property type="evidence" value="ECO:0000314"/>
    <property type="project" value="UniProtKB"/>
</dbReference>
<dbReference type="GO" id="GO:0015254">
    <property type="term" value="F:glycerol channel activity"/>
    <property type="evidence" value="ECO:0000250"/>
    <property type="project" value="UniProtKB"/>
</dbReference>
<dbReference type="GO" id="GO:0140070">
    <property type="term" value="F:hydrogen peroxide channel activity"/>
    <property type="evidence" value="ECO:0000315"/>
    <property type="project" value="UniProtKB"/>
</dbReference>
<dbReference type="GO" id="GO:0015166">
    <property type="term" value="F:polyol transmembrane transporter activity"/>
    <property type="evidence" value="ECO:0000250"/>
    <property type="project" value="UniProtKB"/>
</dbReference>
<dbReference type="GO" id="GO:0005345">
    <property type="term" value="F:purine nucleobase transmembrane transporter activity"/>
    <property type="evidence" value="ECO:0000250"/>
    <property type="project" value="UniProtKB"/>
</dbReference>
<dbReference type="GO" id="GO:0005350">
    <property type="term" value="F:pyrimidine nucleobase transmembrane transporter activity"/>
    <property type="evidence" value="ECO:0000250"/>
    <property type="project" value="UniProtKB"/>
</dbReference>
<dbReference type="GO" id="GO:0015265">
    <property type="term" value="F:urea channel activity"/>
    <property type="evidence" value="ECO:0000315"/>
    <property type="project" value="UniProtKB"/>
</dbReference>
<dbReference type="GO" id="GO:0015204">
    <property type="term" value="F:urea transmembrane transporter activity"/>
    <property type="evidence" value="ECO:0000250"/>
    <property type="project" value="UniProtKB"/>
</dbReference>
<dbReference type="GO" id="GO:0015250">
    <property type="term" value="F:water channel activity"/>
    <property type="evidence" value="ECO:0000250"/>
    <property type="project" value="UniProtKB"/>
</dbReference>
<dbReference type="GO" id="GO:0015837">
    <property type="term" value="P:amine transport"/>
    <property type="evidence" value="ECO:0000250"/>
    <property type="project" value="UniProtKB"/>
</dbReference>
<dbReference type="GO" id="GO:0071320">
    <property type="term" value="P:cellular response to cAMP"/>
    <property type="evidence" value="ECO:0007669"/>
    <property type="project" value="Ensembl"/>
</dbReference>
<dbReference type="GO" id="GO:0071722">
    <property type="term" value="P:detoxification of arsenic-containing substance"/>
    <property type="evidence" value="ECO:0000315"/>
    <property type="project" value="UniProtKB"/>
</dbReference>
<dbReference type="GO" id="GO:0015793">
    <property type="term" value="P:glycerol transmembrane transport"/>
    <property type="evidence" value="ECO:0000250"/>
    <property type="project" value="UniProtKB"/>
</dbReference>
<dbReference type="GO" id="GO:0015791">
    <property type="term" value="P:polyol transmembrane transport"/>
    <property type="evidence" value="ECO:0000250"/>
    <property type="project" value="UniProtKB"/>
</dbReference>
<dbReference type="GO" id="GO:0006863">
    <property type="term" value="P:purine nucleobase transport"/>
    <property type="evidence" value="ECO:0000250"/>
    <property type="project" value="UniProtKB"/>
</dbReference>
<dbReference type="GO" id="GO:0015855">
    <property type="term" value="P:pyrimidine nucleobase transport"/>
    <property type="evidence" value="ECO:0000250"/>
    <property type="project" value="UniProtKB"/>
</dbReference>
<dbReference type="GO" id="GO:0071918">
    <property type="term" value="P:urea transmembrane transport"/>
    <property type="evidence" value="ECO:0000250"/>
    <property type="project" value="UniProtKB"/>
</dbReference>
<dbReference type="GO" id="GO:0006833">
    <property type="term" value="P:water transport"/>
    <property type="evidence" value="ECO:0000250"/>
    <property type="project" value="UniProtKB"/>
</dbReference>
<dbReference type="CDD" id="cd00333">
    <property type="entry name" value="MIP"/>
    <property type="match status" value="1"/>
</dbReference>
<dbReference type="FunFam" id="1.20.1080.10:FF:000005">
    <property type="entry name" value="Aquaporin 3"/>
    <property type="match status" value="1"/>
</dbReference>
<dbReference type="Gene3D" id="1.20.1080.10">
    <property type="entry name" value="Glycerol uptake facilitator protein"/>
    <property type="match status" value="1"/>
</dbReference>
<dbReference type="InterPro" id="IPR023271">
    <property type="entry name" value="Aquaporin-like"/>
</dbReference>
<dbReference type="InterPro" id="IPR015685">
    <property type="entry name" value="Aquaporin_9"/>
</dbReference>
<dbReference type="InterPro" id="IPR000425">
    <property type="entry name" value="MIP"/>
</dbReference>
<dbReference type="InterPro" id="IPR050363">
    <property type="entry name" value="MIP/Aquaporin"/>
</dbReference>
<dbReference type="InterPro" id="IPR022357">
    <property type="entry name" value="MIP_CS"/>
</dbReference>
<dbReference type="NCBIfam" id="TIGR00861">
    <property type="entry name" value="MIP"/>
    <property type="match status" value="1"/>
</dbReference>
<dbReference type="PANTHER" id="PTHR43829">
    <property type="entry name" value="AQUAPORIN OR AQUAGLYCEROPORIN RELATED"/>
    <property type="match status" value="1"/>
</dbReference>
<dbReference type="PANTHER" id="PTHR43829:SF6">
    <property type="entry name" value="AQUAPORIN-9"/>
    <property type="match status" value="1"/>
</dbReference>
<dbReference type="Pfam" id="PF00230">
    <property type="entry name" value="MIP"/>
    <property type="match status" value="1"/>
</dbReference>
<dbReference type="PRINTS" id="PR02021">
    <property type="entry name" value="AQUAPORIN9"/>
</dbReference>
<dbReference type="PRINTS" id="PR00783">
    <property type="entry name" value="MINTRINSICP"/>
</dbReference>
<dbReference type="SUPFAM" id="SSF81338">
    <property type="entry name" value="Aquaporin-like"/>
    <property type="match status" value="1"/>
</dbReference>
<dbReference type="PROSITE" id="PS00221">
    <property type="entry name" value="MIP"/>
    <property type="match status" value="1"/>
</dbReference>
<evidence type="ECO:0000250" key="1">
    <source>
        <dbReference type="UniProtKB" id="O43315"/>
    </source>
</evidence>
<evidence type="ECO:0000250" key="2">
    <source>
        <dbReference type="UniProtKB" id="P56627"/>
    </source>
</evidence>
<evidence type="ECO:0000250" key="3">
    <source>
        <dbReference type="UniProtKB" id="Q96PS8"/>
    </source>
</evidence>
<evidence type="ECO:0000269" key="4">
    <source>
    </source>
</evidence>
<evidence type="ECO:0000269" key="5">
    <source>
    </source>
</evidence>
<evidence type="ECO:0000269" key="6">
    <source>
    </source>
</evidence>
<evidence type="ECO:0000269" key="7">
    <source>
    </source>
</evidence>
<evidence type="ECO:0000269" key="8">
    <source>
    </source>
</evidence>
<evidence type="ECO:0000269" key="9">
    <source>
    </source>
</evidence>
<evidence type="ECO:0000269" key="10">
    <source>
    </source>
</evidence>
<evidence type="ECO:0000305" key="11"/>
<evidence type="ECO:0000305" key="12">
    <source>
    </source>
</evidence>
<evidence type="ECO:0000305" key="13">
    <source>
    </source>
</evidence>
<evidence type="ECO:0000305" key="14">
    <source>
    </source>
</evidence>
<evidence type="ECO:0000305" key="15">
    <source>
    </source>
</evidence>
<evidence type="ECO:0000305" key="16">
    <source>
    </source>
</evidence>
<evidence type="ECO:0000312" key="17">
    <source>
        <dbReference type="MGI" id="MGI:1891066"/>
    </source>
</evidence>
<gene>
    <name evidence="17" type="primary">Aqp9</name>
</gene>
<protein>
    <recommendedName>
        <fullName evidence="12">Aquaporin-9</fullName>
        <shortName evidence="12">AQP-9</shortName>
    </recommendedName>
    <alternativeName>
        <fullName evidence="12">Aquaglyceroporin-9</fullName>
    </alternativeName>
</protein>
<proteinExistence type="evidence at transcript level"/>